<proteinExistence type="evidence at protein level"/>
<organism evidence="3">
    <name type="scientific">Chassalia chartacea</name>
    <name type="common">Chassalia curviflora</name>
    <dbReference type="NCBI Taxonomy" id="510798"/>
    <lineage>
        <taxon>Eukaryota</taxon>
        <taxon>Viridiplantae</taxon>
        <taxon>Streptophyta</taxon>
        <taxon>Embryophyta</taxon>
        <taxon>Tracheophyta</taxon>
        <taxon>Spermatophyta</taxon>
        <taxon>Magnoliopsida</taxon>
        <taxon>eudicotyledons</taxon>
        <taxon>Gunneridae</taxon>
        <taxon>Pentapetalae</taxon>
        <taxon>asterids</taxon>
        <taxon>lamiids</taxon>
        <taxon>Gentianales</taxon>
        <taxon>Rubiaceae</taxon>
        <taxon>Rubioideae</taxon>
        <taxon>Palicoureeae</taxon>
        <taxon>Chassalia</taxon>
    </lineage>
</organism>
<name>CYC5_CHACT</name>
<protein>
    <recommendedName>
        <fullName evidence="3">Chassatide C5</fullName>
    </recommendedName>
    <alternativeName>
        <fullName evidence="3">Cyclotide chaC5</fullName>
    </alternativeName>
</protein>
<dbReference type="SMR" id="C0HKH2"/>
<dbReference type="GO" id="GO:0006952">
    <property type="term" value="P:defense response"/>
    <property type="evidence" value="ECO:0007669"/>
    <property type="project" value="UniProtKB-KW"/>
</dbReference>
<dbReference type="InterPro" id="IPR005535">
    <property type="entry name" value="Cyclotide"/>
</dbReference>
<dbReference type="InterPro" id="IPR012323">
    <property type="entry name" value="Cyclotide_bracelet_CS"/>
</dbReference>
<dbReference type="InterPro" id="IPR036146">
    <property type="entry name" value="Cyclotide_sf"/>
</dbReference>
<dbReference type="Pfam" id="PF03784">
    <property type="entry name" value="Cyclotide"/>
    <property type="match status" value="1"/>
</dbReference>
<dbReference type="PIRSF" id="PIRSF037891">
    <property type="entry name" value="Cycloviolacin"/>
    <property type="match status" value="1"/>
</dbReference>
<dbReference type="SUPFAM" id="SSF57038">
    <property type="entry name" value="Cyclotides"/>
    <property type="match status" value="1"/>
</dbReference>
<dbReference type="PROSITE" id="PS51052">
    <property type="entry name" value="CYCLOTIDE"/>
    <property type="match status" value="1"/>
</dbReference>
<dbReference type="PROSITE" id="PS60008">
    <property type="entry name" value="CYCLOTIDE_BRACELET"/>
    <property type="match status" value="1"/>
</dbReference>
<reference evidence="4" key="1">
    <citation type="journal article" date="2012" name="J. Biol. Chem.">
        <title>Novel Cyclotides and Uncyclotides with Highly Shortened Precursors from Chassalia chartacea and Effects of Methionine Oxidation on Bioactivities.</title>
        <authorList>
            <person name="Nguyen G.K."/>
            <person name="Lim W.H."/>
            <person name="Nguyen P.Q."/>
            <person name="Tam J.P."/>
        </authorList>
    </citation>
    <scope>PROTEIN SEQUENCE</scope>
    <scope>TISSUE SPECIFICITY</scope>
    <scope>MASS SPECTROMETRY</scope>
    <scope>IDENTIFICATION BY MASS SPECTROMETRY</scope>
</reference>
<feature type="peptide" id="PRO_0000440227" description="Chassatide C5" evidence="2">
    <location>
        <begin position="1"/>
        <end position="31"/>
    </location>
</feature>
<feature type="disulfide bond" evidence="1">
    <location>
        <begin position="5"/>
        <end position="21"/>
    </location>
</feature>
<feature type="disulfide bond" evidence="1">
    <location>
        <begin position="9"/>
        <end position="23"/>
    </location>
</feature>
<feature type="disulfide bond" evidence="1">
    <location>
        <begin position="14"/>
        <end position="28"/>
    </location>
</feature>
<feature type="cross-link" description="Cyclopeptide (Gly-Asn)" evidence="2">
    <location>
        <begin position="1"/>
        <end position="31"/>
    </location>
</feature>
<accession>C0HKH2</accession>
<evidence type="ECO:0000255" key="1">
    <source>
        <dbReference type="PROSITE-ProRule" id="PRU00395"/>
    </source>
</evidence>
<evidence type="ECO:0000269" key="2">
    <source>
    </source>
</evidence>
<evidence type="ECO:0000303" key="3">
    <source>
    </source>
</evidence>
<evidence type="ECO:0000305" key="4"/>
<comment type="function">
    <text evidence="1">Probably participates in a plant defense mechanism.</text>
</comment>
<comment type="tissue specificity">
    <text evidence="2">Expressed in pedicel, root and stem but not in leaf and fruit (at protein level).</text>
</comment>
<comment type="domain">
    <text evidence="4">The presence of a 'disulfide through disulfide knot' structurally defines this protein as a knottin.</text>
</comment>
<comment type="PTM">
    <text evidence="1 2">This is a cyclic peptide.</text>
</comment>
<comment type="mass spectrometry" mass="3239.0" method="MALDI" evidence="2"/>
<comment type="similarity">
    <text evidence="1">Belongs to the cyclotide family. Bracelet subfamily.</text>
</comment>
<comment type="caution">
    <text evidence="4">This peptide is cyclic. The start position was chosen by similarity to chassatide C8 for which the DNA sequence is known.</text>
</comment>
<keyword id="KW-0903">Direct protein sequencing</keyword>
<keyword id="KW-1015">Disulfide bond</keyword>
<keyword id="KW-0960">Knottin</keyword>
<keyword id="KW-0611">Plant defense</keyword>
<sequence length="31" mass="3266">GVIPCGESCVFIPCISSVVGCSCKNKVCYRN</sequence>